<dbReference type="EMBL" id="ACFL01000007">
    <property type="protein sequence ID" value="EEU09088.1"/>
    <property type="molecule type" value="Genomic_DNA"/>
</dbReference>
<dbReference type="SMR" id="C7GJB0"/>
<dbReference type="OrthoDB" id="36972at4893"/>
<dbReference type="Proteomes" id="UP000008073">
    <property type="component" value="Unassembled WGS sequence"/>
</dbReference>
<dbReference type="GO" id="GO:0005935">
    <property type="term" value="C:cellular bud neck"/>
    <property type="evidence" value="ECO:0007669"/>
    <property type="project" value="UniProtKB-SubCell"/>
</dbReference>
<proteinExistence type="inferred from homology"/>
<keyword id="KW-0597">Phosphoprotein</keyword>
<accession>C7GJB0</accession>
<gene>
    <name type="primary">AIM44</name>
    <name type="ORF">C1Q_00199</name>
</gene>
<organism>
    <name type="scientific">Saccharomyces cerevisiae (strain JAY291)</name>
    <name type="common">Baker's yeast</name>
    <dbReference type="NCBI Taxonomy" id="574961"/>
    <lineage>
        <taxon>Eukaryota</taxon>
        <taxon>Fungi</taxon>
        <taxon>Dikarya</taxon>
        <taxon>Ascomycota</taxon>
        <taxon>Saccharomycotina</taxon>
        <taxon>Saccharomycetes</taxon>
        <taxon>Saccharomycetales</taxon>
        <taxon>Saccharomycetaceae</taxon>
        <taxon>Saccharomyces</taxon>
    </lineage>
</organism>
<protein>
    <recommendedName>
        <fullName>Altered inheritance of mitochondria protein 44</fullName>
    </recommendedName>
</protein>
<reference key="1">
    <citation type="journal article" date="2009" name="Genome Res.">
        <title>Genome structure of a Saccharomyces cerevisiae strain widely used in bioethanol production.</title>
        <authorList>
            <person name="Argueso J.L."/>
            <person name="Carazzolle M.F."/>
            <person name="Mieczkowski P.A."/>
            <person name="Duarte F.M."/>
            <person name="Netto O.V.C."/>
            <person name="Missawa S.K."/>
            <person name="Galzerani F."/>
            <person name="Costa G.G.L."/>
            <person name="Vidal R.O."/>
            <person name="Noronha M.F."/>
            <person name="Dominska M."/>
            <person name="Andrietta M.G.S."/>
            <person name="Andrietta S.R."/>
            <person name="Cunha A.F."/>
            <person name="Gomes L.H."/>
            <person name="Tavares F.C.A."/>
            <person name="Alcarde A.R."/>
            <person name="Dietrich F.S."/>
            <person name="McCusker J.H."/>
            <person name="Petes T.D."/>
            <person name="Pereira G.A.G."/>
        </authorList>
    </citation>
    <scope>NUCLEOTIDE SEQUENCE [LARGE SCALE GENOMIC DNA]</scope>
    <source>
        <strain>JAY291</strain>
    </source>
</reference>
<feature type="chain" id="PRO_0000408700" description="Altered inheritance of mitochondria protein 44">
    <location>
        <begin position="1"/>
        <end position="724"/>
    </location>
</feature>
<feature type="region of interest" description="Disordered" evidence="3">
    <location>
        <begin position="55"/>
        <end position="77"/>
    </location>
</feature>
<feature type="region of interest" description="Disordered" evidence="3">
    <location>
        <begin position="314"/>
        <end position="383"/>
    </location>
</feature>
<feature type="region of interest" description="Disordered" evidence="3">
    <location>
        <begin position="602"/>
        <end position="674"/>
    </location>
</feature>
<feature type="compositionally biased region" description="Low complexity" evidence="3">
    <location>
        <begin position="315"/>
        <end position="330"/>
    </location>
</feature>
<feature type="compositionally biased region" description="Polar residues" evidence="3">
    <location>
        <begin position="338"/>
        <end position="349"/>
    </location>
</feature>
<feature type="compositionally biased region" description="Basic and acidic residues" evidence="3">
    <location>
        <begin position="350"/>
        <end position="365"/>
    </location>
</feature>
<feature type="compositionally biased region" description="Polar residues" evidence="3">
    <location>
        <begin position="366"/>
        <end position="383"/>
    </location>
</feature>
<feature type="compositionally biased region" description="Acidic residues" evidence="3">
    <location>
        <begin position="617"/>
        <end position="655"/>
    </location>
</feature>
<feature type="compositionally biased region" description="Basic and acidic residues" evidence="3">
    <location>
        <begin position="656"/>
        <end position="671"/>
    </location>
</feature>
<feature type="modified residue" description="Phosphoserine" evidence="2">
    <location>
        <position position="25"/>
    </location>
</feature>
<name>AIM44_YEAS2</name>
<evidence type="ECO:0000250" key="1"/>
<evidence type="ECO:0000250" key="2">
    <source>
        <dbReference type="UniProtKB" id="Q99299"/>
    </source>
</evidence>
<evidence type="ECO:0000256" key="3">
    <source>
        <dbReference type="SAM" id="MobiDB-lite"/>
    </source>
</evidence>
<evidence type="ECO:0000305" key="4"/>
<sequence>MIIRAPIRTKTKSFRGDQMDFKFPSNESLPRGTLEEYHLNNHHLLNDVFAAENGVSRDEDGNSQILSDYTSTSNTNTNSGYSSNGYYSFANISDNTTSSPRIVINQNETARLTSSDSNKSDFFASHDFPGNDSLHYSSSSVVKNQLHSMEAIPEGNITGSISTAFQTIPTADNVSYDIAPSSASSLLPRKSTSKSAILPSTQEAKPMTKLNMEKDIKTIELNNSVVPKPKKKLNRVPTIRRVESSRFSNSRYSSSVSSKSSSSRCSLKRSKAIRCKGGLLYYFTSLGIKIKKKLRKLRLVLRRRLFSYNVQKVPSATNSKTTKSKANINNKSKKRGTNLVNKNSNSTPRLDTKFKANHPQSEDSKVGSNTPRSPLVSYTPSLRRTNSSIRRAASILTASATMTPANNKNSFISVPDNVSHAVTRNSSMYSRSRLVRSKPSTALNAIARQPSIVVENKVIPLSMNRYSIKEEDEYVIDTSSMRELSPVNSVCSSDYDRESSESYSNYADAMETTEVDNKDRVECNNEIQNVNANNEETSNEESYNLMKHYLSTVIAQRIMLRVQIARIQNNKSNVVYMNKSAETNSTIYEDLADSLLTEYEADGSSSQIFDGVSVRADEEEEEDEDDEDDEEEEEENDDEEDEEDEEDDEDDEEEEEKRKEGEGRNLAKEVDELAELSPMRKQSDLSITLRSPFAMLNSAYSNSIISLPTGVVKRSLTLPVGMKI</sequence>
<comment type="subcellular location">
    <subcellularLocation>
        <location evidence="1">Bud neck</location>
    </subcellularLocation>
</comment>
<comment type="similarity">
    <text evidence="4">Belongs to the AIM44 family.</text>
</comment>